<gene>
    <name type="primary">recF</name>
    <name type="ordered locus">CC_0159</name>
</gene>
<accession>P0CAW1</accession>
<accession>P49998</accession>
<accession>Q46000</accession>
<name>RECF_CAUVC</name>
<reference key="1">
    <citation type="journal article" date="2001" name="Proc. Natl. Acad. Sci. U.S.A.">
        <title>Complete genome sequence of Caulobacter crescentus.</title>
        <authorList>
            <person name="Nierman W.C."/>
            <person name="Feldblyum T.V."/>
            <person name="Laub M.T."/>
            <person name="Paulsen I.T."/>
            <person name="Nelson K.E."/>
            <person name="Eisen J.A."/>
            <person name="Heidelberg J.F."/>
            <person name="Alley M.R.K."/>
            <person name="Ohta N."/>
            <person name="Maddock J.R."/>
            <person name="Potocka I."/>
            <person name="Nelson W.C."/>
            <person name="Newton A."/>
            <person name="Stephens C."/>
            <person name="Phadke N.D."/>
            <person name="Ely B."/>
            <person name="DeBoy R.T."/>
            <person name="Dodson R.J."/>
            <person name="Durkin A.S."/>
            <person name="Gwinn M.L."/>
            <person name="Haft D.H."/>
            <person name="Kolonay J.F."/>
            <person name="Smit J."/>
            <person name="Craven M.B."/>
            <person name="Khouri H.M."/>
            <person name="Shetty J."/>
            <person name="Berry K.J."/>
            <person name="Utterback T.R."/>
            <person name="Tran K."/>
            <person name="Wolf A.M."/>
            <person name="Vamathevan J.J."/>
            <person name="Ermolaeva M.D."/>
            <person name="White O."/>
            <person name="Salzberg S.L."/>
            <person name="Venter J.C."/>
            <person name="Shapiro L."/>
            <person name="Fraser C.M."/>
        </authorList>
    </citation>
    <scope>NUCLEOTIDE SEQUENCE [LARGE SCALE GENOMIC DNA]</scope>
    <source>
        <strain>ATCC 19089 / CIP 103742 / CB 15</strain>
    </source>
</reference>
<feature type="chain" id="PRO_0000196402" description="DNA replication and repair protein RecF">
    <location>
        <begin position="1"/>
        <end position="387"/>
    </location>
</feature>
<feature type="binding site" evidence="2">
    <location>
        <begin position="33"/>
        <end position="40"/>
    </location>
    <ligand>
        <name>ATP</name>
        <dbReference type="ChEBI" id="CHEBI:30616"/>
    </ligand>
</feature>
<dbReference type="EMBL" id="AE005673">
    <property type="protein sequence ID" value="AAK22146.1"/>
    <property type="molecule type" value="Genomic_DNA"/>
</dbReference>
<dbReference type="PIR" id="F87268">
    <property type="entry name" value="F87268"/>
</dbReference>
<dbReference type="RefSeq" id="NP_418978.1">
    <property type="nucleotide sequence ID" value="NC_002696.2"/>
</dbReference>
<dbReference type="RefSeq" id="WP_010918048.1">
    <property type="nucleotide sequence ID" value="NC_002696.2"/>
</dbReference>
<dbReference type="SMR" id="P0CAW1"/>
<dbReference type="STRING" id="190650.CC_0159"/>
<dbReference type="EnsemblBacteria" id="AAK22146">
    <property type="protein sequence ID" value="AAK22146"/>
    <property type="gene ID" value="CC_0159"/>
</dbReference>
<dbReference type="KEGG" id="ccr:CC_0159"/>
<dbReference type="PATRIC" id="fig|190650.5.peg.155"/>
<dbReference type="eggNOG" id="COG1195">
    <property type="taxonomic scope" value="Bacteria"/>
</dbReference>
<dbReference type="HOGENOM" id="CLU_040267_2_0_5"/>
<dbReference type="BioCyc" id="CAULO:CC0159-MONOMER"/>
<dbReference type="Proteomes" id="UP000001816">
    <property type="component" value="Chromosome"/>
</dbReference>
<dbReference type="GO" id="GO:0005737">
    <property type="term" value="C:cytoplasm"/>
    <property type="evidence" value="ECO:0007669"/>
    <property type="project" value="UniProtKB-SubCell"/>
</dbReference>
<dbReference type="GO" id="GO:0005524">
    <property type="term" value="F:ATP binding"/>
    <property type="evidence" value="ECO:0007669"/>
    <property type="project" value="UniProtKB-UniRule"/>
</dbReference>
<dbReference type="GO" id="GO:0016887">
    <property type="term" value="F:ATP hydrolysis activity"/>
    <property type="evidence" value="ECO:0007669"/>
    <property type="project" value="InterPro"/>
</dbReference>
<dbReference type="GO" id="GO:0003697">
    <property type="term" value="F:single-stranded DNA binding"/>
    <property type="evidence" value="ECO:0007669"/>
    <property type="project" value="UniProtKB-UniRule"/>
</dbReference>
<dbReference type="GO" id="GO:0006260">
    <property type="term" value="P:DNA replication"/>
    <property type="evidence" value="ECO:0007669"/>
    <property type="project" value="UniProtKB-UniRule"/>
</dbReference>
<dbReference type="GO" id="GO:0000731">
    <property type="term" value="P:DNA synthesis involved in DNA repair"/>
    <property type="evidence" value="ECO:0007669"/>
    <property type="project" value="TreeGrafter"/>
</dbReference>
<dbReference type="GO" id="GO:0006302">
    <property type="term" value="P:double-strand break repair"/>
    <property type="evidence" value="ECO:0007669"/>
    <property type="project" value="TreeGrafter"/>
</dbReference>
<dbReference type="GO" id="GO:0009432">
    <property type="term" value="P:SOS response"/>
    <property type="evidence" value="ECO:0007669"/>
    <property type="project" value="UniProtKB-UniRule"/>
</dbReference>
<dbReference type="Gene3D" id="3.40.50.300">
    <property type="entry name" value="P-loop containing nucleotide triphosphate hydrolases"/>
    <property type="match status" value="1"/>
</dbReference>
<dbReference type="Gene3D" id="1.20.1050.90">
    <property type="entry name" value="RecF/RecN/SMC, N-terminal domain"/>
    <property type="match status" value="1"/>
</dbReference>
<dbReference type="HAMAP" id="MF_00365">
    <property type="entry name" value="RecF"/>
    <property type="match status" value="1"/>
</dbReference>
<dbReference type="InterPro" id="IPR003593">
    <property type="entry name" value="AAA+_ATPase"/>
</dbReference>
<dbReference type="InterPro" id="IPR001238">
    <property type="entry name" value="DNA-binding_RecF"/>
</dbReference>
<dbReference type="InterPro" id="IPR018078">
    <property type="entry name" value="DNA-binding_RecF_CS"/>
</dbReference>
<dbReference type="InterPro" id="IPR027417">
    <property type="entry name" value="P-loop_NTPase"/>
</dbReference>
<dbReference type="InterPro" id="IPR003395">
    <property type="entry name" value="RecF/RecN/SMC_N"/>
</dbReference>
<dbReference type="InterPro" id="IPR042174">
    <property type="entry name" value="RecF_2"/>
</dbReference>
<dbReference type="NCBIfam" id="TIGR00611">
    <property type="entry name" value="recf"/>
    <property type="match status" value="1"/>
</dbReference>
<dbReference type="PANTHER" id="PTHR32182">
    <property type="entry name" value="DNA REPLICATION AND REPAIR PROTEIN RECF"/>
    <property type="match status" value="1"/>
</dbReference>
<dbReference type="PANTHER" id="PTHR32182:SF0">
    <property type="entry name" value="DNA REPLICATION AND REPAIR PROTEIN RECF"/>
    <property type="match status" value="1"/>
</dbReference>
<dbReference type="Pfam" id="PF02463">
    <property type="entry name" value="SMC_N"/>
    <property type="match status" value="1"/>
</dbReference>
<dbReference type="SMART" id="SM00382">
    <property type="entry name" value="AAA"/>
    <property type="match status" value="1"/>
</dbReference>
<dbReference type="SUPFAM" id="SSF52540">
    <property type="entry name" value="P-loop containing nucleoside triphosphate hydrolases"/>
    <property type="match status" value="1"/>
</dbReference>
<dbReference type="PROSITE" id="PS00617">
    <property type="entry name" value="RECF_1"/>
    <property type="match status" value="1"/>
</dbReference>
<dbReference type="PROSITE" id="PS00618">
    <property type="entry name" value="RECF_2"/>
    <property type="match status" value="1"/>
</dbReference>
<evidence type="ECO:0000250" key="1"/>
<evidence type="ECO:0000255" key="2"/>
<evidence type="ECO:0000305" key="3"/>
<proteinExistence type="inferred from homology"/>
<keyword id="KW-0067">ATP-binding</keyword>
<keyword id="KW-0963">Cytoplasm</keyword>
<keyword id="KW-0227">DNA damage</keyword>
<keyword id="KW-0234">DNA repair</keyword>
<keyword id="KW-0235">DNA replication</keyword>
<keyword id="KW-0238">DNA-binding</keyword>
<keyword id="KW-0547">Nucleotide-binding</keyword>
<keyword id="KW-1185">Reference proteome</keyword>
<keyword id="KW-0742">SOS response</keyword>
<protein>
    <recommendedName>
        <fullName>DNA replication and repair protein RecF</fullName>
    </recommendedName>
</protein>
<comment type="function">
    <text evidence="1">The RecF protein is involved in DNA metabolism; it is required for DNA replication and normal SOS inducibility. RecF binds preferentially to single-stranded, linear DNA. It also seems to bind ATP (By similarity).</text>
</comment>
<comment type="subcellular location">
    <subcellularLocation>
        <location evidence="1">Cytoplasm</location>
    </subcellularLocation>
</comment>
<comment type="similarity">
    <text evidence="3">Belongs to the RecF family.</text>
</comment>
<sequence>MASAALLSLTLADFRSYERARLETGGRSVYLFGANGAGKTNLLEAISLLSPGKGLRGVSLAEVGRRLPGEAVGRAWAVAAEVQSGEDAPVRIGTGVEQGGAARRTVRLEGETVPPGRLADHVRPIWLTPAQDRLFLEAASERRRFFDRLVFAGEPAHAANANGYDKAQRERMRLLVDAAETGAPADAAWLTALEARLAEFGALLAQARARTLLALQAEIDGRGDRPFPLARLGLTGEWERMALEGAPFAEIELKLAQALASARARDGAAGRALTGPHRGDLAIFHVEKDRPAAECSTGEQKALILNLVLAQAARLSRAESAPNPVILLDEVAAHLDLTRRAALADELTALKLQAFLTGTDESLFDHLKGRALGVRVGDAGLTTLEDE</sequence>
<organism>
    <name type="scientific">Caulobacter vibrioides (strain ATCC 19089 / CIP 103742 / CB 15)</name>
    <name type="common">Caulobacter crescentus</name>
    <dbReference type="NCBI Taxonomy" id="190650"/>
    <lineage>
        <taxon>Bacteria</taxon>
        <taxon>Pseudomonadati</taxon>
        <taxon>Pseudomonadota</taxon>
        <taxon>Alphaproteobacteria</taxon>
        <taxon>Caulobacterales</taxon>
        <taxon>Caulobacteraceae</taxon>
        <taxon>Caulobacter</taxon>
    </lineage>
</organism>